<feature type="chain" id="PRO_0000452173" description="Peptidoglycan O-acetyltransferase OatA">
    <location>
        <begin position="1"/>
        <end position="622"/>
    </location>
</feature>
<feature type="transmembrane region" description="Helical" evidence="2">
    <location>
        <begin position="11"/>
        <end position="31"/>
    </location>
</feature>
<feature type="transmembrane region" description="Helical" evidence="2">
    <location>
        <begin position="39"/>
        <end position="59"/>
    </location>
</feature>
<feature type="transmembrane region" description="Helical" evidence="2">
    <location>
        <begin position="81"/>
        <end position="101"/>
    </location>
</feature>
<feature type="transmembrane region" description="Helical" evidence="2">
    <location>
        <begin position="143"/>
        <end position="163"/>
    </location>
</feature>
<feature type="transmembrane region" description="Helical" evidence="2">
    <location>
        <begin position="173"/>
        <end position="193"/>
    </location>
</feature>
<feature type="transmembrane region" description="Helical" evidence="2">
    <location>
        <begin position="212"/>
        <end position="232"/>
    </location>
</feature>
<feature type="transmembrane region" description="Helical" evidence="2">
    <location>
        <begin position="237"/>
        <end position="257"/>
    </location>
</feature>
<feature type="transmembrane region" description="Helical" evidence="2">
    <location>
        <begin position="267"/>
        <end position="287"/>
    </location>
</feature>
<feature type="transmembrane region" description="Helical" evidence="2">
    <location>
        <begin position="307"/>
        <end position="327"/>
    </location>
</feature>
<feature type="transmembrane region" description="Helical" evidence="2">
    <location>
        <begin position="334"/>
        <end position="354"/>
    </location>
</feature>
<feature type="transmembrane region" description="Helical" evidence="2">
    <location>
        <begin position="387"/>
        <end position="407"/>
    </location>
</feature>
<feature type="region of interest" description="Disordered" evidence="3">
    <location>
        <begin position="412"/>
        <end position="467"/>
    </location>
</feature>
<feature type="compositionally biased region" description="Low complexity" evidence="3">
    <location>
        <begin position="413"/>
        <end position="424"/>
    </location>
</feature>
<feature type="compositionally biased region" description="Basic and acidic residues" evidence="3">
    <location>
        <begin position="425"/>
        <end position="461"/>
    </location>
</feature>
<feature type="active site" evidence="1">
    <location>
        <position position="480"/>
    </location>
</feature>
<feature type="active site" evidence="1">
    <location>
        <position position="600"/>
    </location>
</feature>
<feature type="active site" evidence="1">
    <location>
        <position position="603"/>
    </location>
</feature>
<accession>Q8Y7I6</accession>
<protein>
    <recommendedName>
        <fullName evidence="5">Peptidoglycan O-acetyltransferase OatA</fullName>
        <ecNumber evidence="7">2.3.1.-</ecNumber>
    </recommendedName>
</protein>
<evidence type="ECO:0000250" key="1">
    <source>
        <dbReference type="UniProtKB" id="Q2FV54"/>
    </source>
</evidence>
<evidence type="ECO:0000255" key="2"/>
<evidence type="ECO:0000256" key="3">
    <source>
        <dbReference type="SAM" id="MobiDB-lite"/>
    </source>
</evidence>
<evidence type="ECO:0000269" key="4">
    <source>
    </source>
</evidence>
<evidence type="ECO:0000303" key="5">
    <source>
    </source>
</evidence>
<evidence type="ECO:0000305" key="6"/>
<evidence type="ECO:0000305" key="7">
    <source>
    </source>
</evidence>
<evidence type="ECO:0000312" key="8">
    <source>
        <dbReference type="EMBL" id="CAC99369.1"/>
    </source>
</evidence>
<evidence type="ECO:0000312" key="9">
    <source>
        <dbReference type="Proteomes" id="UP000000817"/>
    </source>
</evidence>
<gene>
    <name evidence="5" type="primary">oatA</name>
    <name evidence="5 8" type="ordered locus">lmo1291</name>
</gene>
<dbReference type="EC" id="2.3.1.-" evidence="7"/>
<dbReference type="EMBL" id="AL591978">
    <property type="protein sequence ID" value="CAC99369.1"/>
    <property type="molecule type" value="Genomic_DNA"/>
</dbReference>
<dbReference type="PIR" id="AC1236">
    <property type="entry name" value="AC1236"/>
</dbReference>
<dbReference type="RefSeq" id="NP_464816.1">
    <property type="nucleotide sequence ID" value="NC_003210.1"/>
</dbReference>
<dbReference type="RefSeq" id="WP_009932001.1">
    <property type="nucleotide sequence ID" value="NZ_CP149495.1"/>
</dbReference>
<dbReference type="SMR" id="Q8Y7I6"/>
<dbReference type="STRING" id="169963.gene:17593948"/>
<dbReference type="PaxDb" id="169963-lmo1291"/>
<dbReference type="EnsemblBacteria" id="CAC99369">
    <property type="protein sequence ID" value="CAC99369"/>
    <property type="gene ID" value="CAC99369"/>
</dbReference>
<dbReference type="GeneID" id="985119"/>
<dbReference type="KEGG" id="lmo:lmo1291"/>
<dbReference type="PATRIC" id="fig|169963.11.peg.1326"/>
<dbReference type="eggNOG" id="COG1835">
    <property type="taxonomic scope" value="Bacteria"/>
</dbReference>
<dbReference type="eggNOG" id="COG2755">
    <property type="taxonomic scope" value="Bacteria"/>
</dbReference>
<dbReference type="HOGENOM" id="CLU_005679_11_2_9"/>
<dbReference type="OrthoDB" id="9796461at2"/>
<dbReference type="PhylomeDB" id="Q8Y7I6"/>
<dbReference type="BioCyc" id="LMON169963:LMO1291-MONOMER"/>
<dbReference type="Proteomes" id="UP000000817">
    <property type="component" value="Chromosome"/>
</dbReference>
<dbReference type="GO" id="GO:0005576">
    <property type="term" value="C:extracellular region"/>
    <property type="evidence" value="ECO:0007669"/>
    <property type="project" value="UniProtKB-KW"/>
</dbReference>
<dbReference type="GO" id="GO:0016020">
    <property type="term" value="C:membrane"/>
    <property type="evidence" value="ECO:0000318"/>
    <property type="project" value="GO_Central"/>
</dbReference>
<dbReference type="GO" id="GO:0005886">
    <property type="term" value="C:plasma membrane"/>
    <property type="evidence" value="ECO:0007669"/>
    <property type="project" value="UniProtKB-SubCell"/>
</dbReference>
<dbReference type="GO" id="GO:0016747">
    <property type="term" value="F:acyltransferase activity, transferring groups other than amino-acyl groups"/>
    <property type="evidence" value="ECO:0007669"/>
    <property type="project" value="InterPro"/>
</dbReference>
<dbReference type="GO" id="GO:0009103">
    <property type="term" value="P:lipopolysaccharide biosynthetic process"/>
    <property type="evidence" value="ECO:0000318"/>
    <property type="project" value="GO_Central"/>
</dbReference>
<dbReference type="GO" id="GO:0046677">
    <property type="term" value="P:response to antibiotic"/>
    <property type="evidence" value="ECO:0007669"/>
    <property type="project" value="UniProtKB-KW"/>
</dbReference>
<dbReference type="CDD" id="cd01840">
    <property type="entry name" value="SGNH_hydrolase_yrhL_like"/>
    <property type="match status" value="1"/>
</dbReference>
<dbReference type="Gene3D" id="3.40.50.1110">
    <property type="entry name" value="SGNH hydrolase"/>
    <property type="match status" value="1"/>
</dbReference>
<dbReference type="InterPro" id="IPR002656">
    <property type="entry name" value="Acyl_transf_3_dom"/>
</dbReference>
<dbReference type="InterPro" id="IPR050879">
    <property type="entry name" value="Acyltransferase_3"/>
</dbReference>
<dbReference type="InterPro" id="IPR036514">
    <property type="entry name" value="SGNH_hydro_sf"/>
</dbReference>
<dbReference type="PANTHER" id="PTHR23028">
    <property type="entry name" value="ACETYLTRANSFERASE"/>
    <property type="match status" value="1"/>
</dbReference>
<dbReference type="PANTHER" id="PTHR23028:SF53">
    <property type="entry name" value="ACYL_TRANSF_3 DOMAIN-CONTAINING PROTEIN"/>
    <property type="match status" value="1"/>
</dbReference>
<dbReference type="Pfam" id="PF01757">
    <property type="entry name" value="Acyl_transf_3"/>
    <property type="match status" value="1"/>
</dbReference>
<dbReference type="SUPFAM" id="SSF52266">
    <property type="entry name" value="SGNH hydrolase"/>
    <property type="match status" value="1"/>
</dbReference>
<organism evidence="8">
    <name type="scientific">Listeria monocytogenes serovar 1/2a (strain ATCC BAA-679 / EGD-e)</name>
    <dbReference type="NCBI Taxonomy" id="169963"/>
    <lineage>
        <taxon>Bacteria</taxon>
        <taxon>Bacillati</taxon>
        <taxon>Bacillota</taxon>
        <taxon>Bacilli</taxon>
        <taxon>Bacillales</taxon>
        <taxon>Listeriaceae</taxon>
        <taxon>Listeria</taxon>
    </lineage>
</organism>
<keyword id="KW-0012">Acyltransferase</keyword>
<keyword id="KW-0046">Antibiotic resistance</keyword>
<keyword id="KW-1003">Cell membrane</keyword>
<keyword id="KW-0134">Cell wall</keyword>
<keyword id="KW-0472">Membrane</keyword>
<keyword id="KW-1185">Reference proteome</keyword>
<keyword id="KW-0964">Secreted</keyword>
<keyword id="KW-0808">Transferase</keyword>
<keyword id="KW-0812">Transmembrane</keyword>
<keyword id="KW-1133">Transmembrane helix</keyword>
<keyword id="KW-0843">Virulence</keyword>
<reference evidence="8 9" key="1">
    <citation type="journal article" date="2001" name="Science">
        <title>Comparative genomics of Listeria species.</title>
        <authorList>
            <person name="Glaser P."/>
            <person name="Frangeul L."/>
            <person name="Buchrieser C."/>
            <person name="Rusniok C."/>
            <person name="Amend A."/>
            <person name="Baquero F."/>
            <person name="Berche P."/>
            <person name="Bloecker H."/>
            <person name="Brandt P."/>
            <person name="Chakraborty T."/>
            <person name="Charbit A."/>
            <person name="Chetouani F."/>
            <person name="Couve E."/>
            <person name="de Daruvar A."/>
            <person name="Dehoux P."/>
            <person name="Domann E."/>
            <person name="Dominguez-Bernal G."/>
            <person name="Duchaud E."/>
            <person name="Durant L."/>
            <person name="Dussurget O."/>
            <person name="Entian K.-D."/>
            <person name="Fsihi H."/>
            <person name="Garcia-del Portillo F."/>
            <person name="Garrido P."/>
            <person name="Gautier L."/>
            <person name="Goebel W."/>
            <person name="Gomez-Lopez N."/>
            <person name="Hain T."/>
            <person name="Hauf J."/>
            <person name="Jackson D."/>
            <person name="Jones L.-M."/>
            <person name="Kaerst U."/>
            <person name="Kreft J."/>
            <person name="Kuhn M."/>
            <person name="Kunst F."/>
            <person name="Kurapkat G."/>
            <person name="Madueno E."/>
            <person name="Maitournam A."/>
            <person name="Mata Vicente J."/>
            <person name="Ng E."/>
            <person name="Nedjari H."/>
            <person name="Nordsiek G."/>
            <person name="Novella S."/>
            <person name="de Pablos B."/>
            <person name="Perez-Diaz J.-C."/>
            <person name="Purcell R."/>
            <person name="Remmel B."/>
            <person name="Rose M."/>
            <person name="Schlueter T."/>
            <person name="Simoes N."/>
            <person name="Tierrez A."/>
            <person name="Vazquez-Boland J.-A."/>
            <person name="Voss H."/>
            <person name="Wehland J."/>
            <person name="Cossart P."/>
        </authorList>
    </citation>
    <scope>NUCLEOTIDE SEQUENCE [LARGE SCALE GENOMIC DNA]</scope>
    <source>
        <strain evidence="9">ATCC BAA-679 / EGD-e</strain>
    </source>
</reference>
<reference key="2">
    <citation type="journal article" date="2011" name="J. Infect. Dis.">
        <title>OatA, a peptidoglycan O-acetyltransferase involved in Listeria monocytogenes immune escape, is critical for virulence.</title>
        <authorList>
            <person name="Aubry C."/>
            <person name="Goulard C."/>
            <person name="Nahori M.A."/>
            <person name="Cayet N."/>
            <person name="Decalf J."/>
            <person name="Sachse M."/>
            <person name="Boneca I.G."/>
            <person name="Cossart P."/>
            <person name="Dussurget O."/>
        </authorList>
    </citation>
    <scope>FUNCTION</scope>
    <scope>CATALYTIC ACTIVITY</scope>
    <scope>DISRUPTION PHENOTYPE</scope>
    <source>
        <strain evidence="5">ATCC BAA-679 / EGD-e</strain>
    </source>
</reference>
<name>OATA_LISMO</name>
<comment type="function">
    <text evidence="4">Responsible for O-acetylation at the C6-hydroxyl group of N-acetylmuramyl residues, forming the corresponding N,6-O-diacetylmuramic acid of the peptidoglycan. O-acetylation of the peptidoglycan is the major determinant for lysozyme resistance. Critical for virulence and escape from innate immune response of the host. Involved at both early and later stages of listeriosis in the mouse model of infection. Required for successful host colonization and for intracellular survival of bacteria in macrophages of the infected host. Controls the production of inflammatory mediators in the liver of the infected host. Confers resistance to host antimicrobial molecules and to cell wall-targeting molecules such as beta-lactam antibiotics and bacteriocins.</text>
</comment>
<comment type="subcellular location">
    <subcellularLocation>
        <location evidence="6">Cell membrane</location>
        <topology evidence="2">Multi-pass membrane protein</topology>
    </subcellularLocation>
    <subcellularLocation>
        <location evidence="6">Secreted</location>
        <location evidence="6">Cell wall</location>
    </subcellularLocation>
</comment>
<comment type="disruption phenotype">
    <text evidence="4">Cells lacking this gene have no O-acetylated N-acetyl muramic acid residues on the cell wall. Sensitive to bacterial cell wall targeting antimicrobial molecules lysozyme, beta-lactam antibiotic cefotaxime and Staphylococcus gallinarum lantibiotic gallidermin. Impaired postinfection intracellular survival of bacteria inside human acute monocytic leukemia (THP-1) cells. Killed more efficiently and rapidly in mouse postinfection peritoneal-elicited macrophages (PEM) and bone marrow-derived macrophages (BMDM). Impaired ability of the bacteria to multiply in infected murine macrophage-like (RAW264.7) cells. Bacteria do not accumulate in vacuoles of the infected RAW264.7 cells, but reside in the cytosol and the infected cells are not forming protrusions. Virulence is drastically reduced in mice following intravenous infection as observed by the dramatic difference in LD(50) of the mutant (1100000 bacteria) compared to wild-type (700 bacteria). With sublethal infectious doses, has a reduced capacity to replicate in liver and spleen compared to wild-type. In the intestinal lumen of intragastrically infected human E-cadherin transgenic mice, which are permissive to Listeria oral infection, the number of bacteria is strongly decreased 24 hours postinfection. There are also significantly fewer bacteria in the small intestine tissue compared to wild-type. Triggers increased secretion of cytokines interleukin 2 (IL-2), IL-6, IL-12 and IL-5, and chemokines CCL2, CXCL9 and CCL3 from the liver cells of the infected mouse at 6 hours postinfection. At later time points of infection, the production of the inflammatory mediators is increased in case of IL-6, similar in case of IL-2, CXCL9 and IL-5, and lower in case of IL-12, CCL2 and CCL3 compared to the wild-type. The virulence of a double oatA/pgdA deletion mutant is more reduced than that of either single mutant as detected by lack of colonization in the bloodstream, liver and spleen of infected mouse 24 hours postinfection.</text>
</comment>
<comment type="similarity">
    <text evidence="6">Belongs to the acyltransferase 3 family.</text>
</comment>
<sequence>MKRTTRYSRKYVPSIDGLRALAVIAVIAYHLNFSWAKGGFIGVDIFFVLSGYLITNILLTQWEKNQSLQLKQFWIRRFRRLIPAVYVMIVVVVIYSVFFHPEILKNLRGDAIASFFYVSNWWFIFHNVSYFDSFGLPSPLKNLWSLAIEEQFYLIWPAFLLVFLKWVKNPKLLLKIVIGLGLLSAVWMTILYVPGTDPSRVYYGTDTRAFDLLSGCALAFVWPFNRLSPVVPRKSKAVLNIAGTISILCFILFTAFVSEYQPFLYRGGLLFVAILGVIMIATISHPASYLSKIFSFKPLRWIGTRSYGIYLWHYPIITLTTPVLEITQPNIWRAILQVAATFIIAELSFRFIETPIRKNGFINYFKGFKDKNYFIWKNKPVGKWLSIAGVVAVLAIFTLGMSNVLSVNTNAEKQQTSVKTTTSTPDEKKDDKKEDKATKDKEADSNKASEQKETQKPDNKNKSAATPKTIITQTVAIGDSVMLDIEPYLKEAVPNITIDGLVGRQLRDAITTATGYKKFNSENSSVILELGTNGPFTEDQLNDLLDQFDKATIYLVNTRVPRGWQSDVNKSIANAASRPNVTVVDWYSRSSGQSQYFAPDGVHLTKAGAQAYVAMLTSVMNK</sequence>
<proteinExistence type="evidence at protein level"/>